<organism>
    <name type="scientific">Mycoplasma pneumoniae (strain ATCC 29342 / M129 / Subtype 1)</name>
    <name type="common">Mycoplasmoides pneumoniae</name>
    <dbReference type="NCBI Taxonomy" id="272634"/>
    <lineage>
        <taxon>Bacteria</taxon>
        <taxon>Bacillati</taxon>
        <taxon>Mycoplasmatota</taxon>
        <taxon>Mycoplasmoidales</taxon>
        <taxon>Mycoplasmoidaceae</taxon>
        <taxon>Mycoplasmoides</taxon>
    </lineage>
</organism>
<accession>P75401</accession>
<evidence type="ECO:0000250" key="1"/>
<evidence type="ECO:0000305" key="2"/>
<keyword id="KW-0378">Hydrolase</keyword>
<keyword id="KW-0460">Magnesium</keyword>
<keyword id="KW-0479">Metal-binding</keyword>
<keyword id="KW-1185">Reference proteome</keyword>
<sequence>MKNKIKYVYSDLDGTIVSWNPKNQFTHQGKTYKNLHEVSHATVTAFKQLQAQGIKIGIVTGRDYCRVRWLEKYLNTDLPTITLDGAIIYFRDEIIRQEVLDKEFIHGINQIVKRYPTAAFKLNMGWGNYYTCNPSLIFEGDHAYREHFNADSKFYRKEIDNTVDWDINNMKVNQVYFDTFTCPEPMIQELDNLVEKSDVTAKSYRHSLYIIKKGVSKASALQNLQRDFLVEMKPANTIVFGDGDNDIEMMQWADHSVSLTGSDPECYKLAKYHTDSVDDDGIAKWINKNLLC</sequence>
<dbReference type="EC" id="3.1.3.-"/>
<dbReference type="EMBL" id="U00089">
    <property type="protein sequence ID" value="AAB96104.1"/>
    <property type="molecule type" value="Genomic_DNA"/>
</dbReference>
<dbReference type="PIR" id="S73782">
    <property type="entry name" value="S73782"/>
</dbReference>
<dbReference type="RefSeq" id="NP_110069.1">
    <property type="nucleotide sequence ID" value="NC_000912.1"/>
</dbReference>
<dbReference type="RefSeq" id="WP_010874737.1">
    <property type="nucleotide sequence ID" value="NZ_OU342337.1"/>
</dbReference>
<dbReference type="SMR" id="P75401"/>
<dbReference type="IntAct" id="P75401">
    <property type="interactions" value="1"/>
</dbReference>
<dbReference type="STRING" id="272634.MPN_381"/>
<dbReference type="EnsemblBacteria" id="AAB96104">
    <property type="protein sequence ID" value="AAB96104"/>
    <property type="gene ID" value="MPN_381"/>
</dbReference>
<dbReference type="KEGG" id="mpn:MPN_381"/>
<dbReference type="PATRIC" id="fig|272634.6.peg.412"/>
<dbReference type="HOGENOM" id="CLU_044146_0_3_14"/>
<dbReference type="OrthoDB" id="399211at2"/>
<dbReference type="BioCyc" id="MPNE272634:G1GJ3-604-MONOMER"/>
<dbReference type="Proteomes" id="UP000000808">
    <property type="component" value="Chromosome"/>
</dbReference>
<dbReference type="GO" id="GO:0005829">
    <property type="term" value="C:cytosol"/>
    <property type="evidence" value="ECO:0007669"/>
    <property type="project" value="TreeGrafter"/>
</dbReference>
<dbReference type="GO" id="GO:0000287">
    <property type="term" value="F:magnesium ion binding"/>
    <property type="evidence" value="ECO:0007669"/>
    <property type="project" value="TreeGrafter"/>
</dbReference>
<dbReference type="GO" id="GO:0016791">
    <property type="term" value="F:phosphatase activity"/>
    <property type="evidence" value="ECO:0007669"/>
    <property type="project" value="TreeGrafter"/>
</dbReference>
<dbReference type="Gene3D" id="3.30.1240.10">
    <property type="match status" value="1"/>
</dbReference>
<dbReference type="Gene3D" id="3.40.50.1000">
    <property type="entry name" value="HAD superfamily/HAD-like"/>
    <property type="match status" value="1"/>
</dbReference>
<dbReference type="InterPro" id="IPR000150">
    <property type="entry name" value="Cof"/>
</dbReference>
<dbReference type="InterPro" id="IPR036412">
    <property type="entry name" value="HAD-like_sf"/>
</dbReference>
<dbReference type="InterPro" id="IPR006379">
    <property type="entry name" value="HAD-SF_hydro_IIB"/>
</dbReference>
<dbReference type="InterPro" id="IPR023214">
    <property type="entry name" value="HAD_sf"/>
</dbReference>
<dbReference type="NCBIfam" id="TIGR00099">
    <property type="entry name" value="Cof-subfamily"/>
    <property type="match status" value="1"/>
</dbReference>
<dbReference type="NCBIfam" id="TIGR01484">
    <property type="entry name" value="HAD-SF-IIB"/>
    <property type="match status" value="1"/>
</dbReference>
<dbReference type="PANTHER" id="PTHR10000:SF8">
    <property type="entry name" value="HAD SUPERFAMILY HYDROLASE-LIKE, TYPE 3"/>
    <property type="match status" value="1"/>
</dbReference>
<dbReference type="PANTHER" id="PTHR10000">
    <property type="entry name" value="PHOSPHOSERINE PHOSPHATASE"/>
    <property type="match status" value="1"/>
</dbReference>
<dbReference type="Pfam" id="PF08282">
    <property type="entry name" value="Hydrolase_3"/>
    <property type="match status" value="1"/>
</dbReference>
<dbReference type="SUPFAM" id="SSF56784">
    <property type="entry name" value="HAD-like"/>
    <property type="match status" value="1"/>
</dbReference>
<dbReference type="PROSITE" id="PS01228">
    <property type="entry name" value="COF_1"/>
    <property type="match status" value="1"/>
</dbReference>
<dbReference type="PROSITE" id="PS01229">
    <property type="entry name" value="COF_2"/>
    <property type="match status" value="1"/>
</dbReference>
<proteinExistence type="inferred from homology"/>
<name>Y381_MYCPN</name>
<protein>
    <recommendedName>
        <fullName>Putative phosphatase MPN_381</fullName>
        <ecNumber>3.1.3.-</ecNumber>
    </recommendedName>
</protein>
<reference key="1">
    <citation type="journal article" date="1996" name="Nucleic Acids Res.">
        <title>Complete sequence analysis of the genome of the bacterium Mycoplasma pneumoniae.</title>
        <authorList>
            <person name="Himmelreich R."/>
            <person name="Hilbert H."/>
            <person name="Plagens H."/>
            <person name="Pirkl E."/>
            <person name="Li B.-C."/>
            <person name="Herrmann R."/>
        </authorList>
    </citation>
    <scope>NUCLEOTIDE SEQUENCE [LARGE SCALE GENOMIC DNA]</scope>
    <source>
        <strain>ATCC 29342 / M129 / Subtype 1</strain>
    </source>
</reference>
<gene>
    <name type="ordered locus">MPN_381</name>
    <name type="ORF">A19_orf292</name>
    <name type="ORF">MP456</name>
</gene>
<feature type="chain" id="PRO_0000054438" description="Putative phosphatase MPN_381">
    <location>
        <begin position="1"/>
        <end position="292"/>
    </location>
</feature>
<feature type="active site" description="Nucleophile" evidence="1">
    <location>
        <position position="11"/>
    </location>
</feature>
<feature type="binding site" evidence="1">
    <location>
        <position position="11"/>
    </location>
    <ligand>
        <name>Mg(2+)</name>
        <dbReference type="ChEBI" id="CHEBI:18420"/>
    </ligand>
</feature>
<feature type="binding site" evidence="1">
    <location>
        <position position="12"/>
    </location>
    <ligand>
        <name>phosphate</name>
        <dbReference type="ChEBI" id="CHEBI:43474"/>
    </ligand>
</feature>
<feature type="binding site" evidence="1">
    <location>
        <position position="13"/>
    </location>
    <ligand>
        <name>Mg(2+)</name>
        <dbReference type="ChEBI" id="CHEBI:18420"/>
    </ligand>
</feature>
<feature type="binding site" evidence="1">
    <location>
        <begin position="60"/>
        <end position="61"/>
    </location>
    <ligand>
        <name>phosphate</name>
        <dbReference type="ChEBI" id="CHEBI:43474"/>
    </ligand>
</feature>
<feature type="binding site" evidence="1">
    <location>
        <position position="217"/>
    </location>
    <ligand>
        <name>phosphate</name>
        <dbReference type="ChEBI" id="CHEBI:43474"/>
    </ligand>
</feature>
<feature type="binding site" evidence="1">
    <location>
        <position position="242"/>
    </location>
    <ligand>
        <name>Mg(2+)</name>
        <dbReference type="ChEBI" id="CHEBI:18420"/>
    </ligand>
</feature>
<feature type="binding site" evidence="1">
    <location>
        <position position="245"/>
    </location>
    <ligand>
        <name>phosphate</name>
        <dbReference type="ChEBI" id="CHEBI:43474"/>
    </ligand>
</feature>
<comment type="cofactor">
    <cofactor evidence="1">
        <name>Mg(2+)</name>
        <dbReference type="ChEBI" id="CHEBI:18420"/>
    </cofactor>
</comment>
<comment type="similarity">
    <text evidence="2">Belongs to the HAD-like hydrolase superfamily. Cof family.</text>
</comment>